<accession>Q8CSE3</accession>
<evidence type="ECO:0000255" key="1">
    <source>
        <dbReference type="HAMAP-Rule" id="MF_00294"/>
    </source>
</evidence>
<evidence type="ECO:0000256" key="2">
    <source>
        <dbReference type="SAM" id="MobiDB-lite"/>
    </source>
</evidence>
<evidence type="ECO:0000305" key="3"/>
<gene>
    <name type="primary">rpmG1</name>
    <name type="ordered locus">SE_1237</name>
</gene>
<proteinExistence type="inferred from homology"/>
<organism>
    <name type="scientific">Staphylococcus epidermidis (strain ATCC 12228 / FDA PCI 1200)</name>
    <dbReference type="NCBI Taxonomy" id="176280"/>
    <lineage>
        <taxon>Bacteria</taxon>
        <taxon>Bacillati</taxon>
        <taxon>Bacillota</taxon>
        <taxon>Bacilli</taxon>
        <taxon>Bacillales</taxon>
        <taxon>Staphylococcaceae</taxon>
        <taxon>Staphylococcus</taxon>
    </lineage>
</organism>
<protein>
    <recommendedName>
        <fullName evidence="1">Large ribosomal subunit protein bL33A</fullName>
    </recommendedName>
    <alternativeName>
        <fullName>50S ribosomal protein L33 1</fullName>
    </alternativeName>
</protein>
<feature type="chain" id="PRO_0000170229" description="Large ribosomal subunit protein bL33A">
    <location>
        <begin position="1"/>
        <end position="49"/>
    </location>
</feature>
<feature type="region of interest" description="Disordered" evidence="2">
    <location>
        <begin position="21"/>
        <end position="49"/>
    </location>
</feature>
<feature type="compositionally biased region" description="Basic and acidic residues" evidence="2">
    <location>
        <begin position="25"/>
        <end position="49"/>
    </location>
</feature>
<comment type="similarity">
    <text evidence="3">Belongs to the bacterial ribosomal protein bL33 family.</text>
</comment>
<dbReference type="EMBL" id="AE015929">
    <property type="protein sequence ID" value="AAO04836.1"/>
    <property type="molecule type" value="Genomic_DNA"/>
</dbReference>
<dbReference type="RefSeq" id="NP_764792.1">
    <property type="nucleotide sequence ID" value="NC_004461.1"/>
</dbReference>
<dbReference type="SMR" id="Q8CSE3"/>
<dbReference type="KEGG" id="sep:SE_1237"/>
<dbReference type="PATRIC" id="fig|176280.10.peg.1206"/>
<dbReference type="eggNOG" id="COG0267">
    <property type="taxonomic scope" value="Bacteria"/>
</dbReference>
<dbReference type="HOGENOM" id="CLU_190949_0_2_9"/>
<dbReference type="OrthoDB" id="197660at2"/>
<dbReference type="Proteomes" id="UP000001411">
    <property type="component" value="Chromosome"/>
</dbReference>
<dbReference type="GO" id="GO:0005737">
    <property type="term" value="C:cytoplasm"/>
    <property type="evidence" value="ECO:0007669"/>
    <property type="project" value="UniProtKB-ARBA"/>
</dbReference>
<dbReference type="GO" id="GO:1990904">
    <property type="term" value="C:ribonucleoprotein complex"/>
    <property type="evidence" value="ECO:0007669"/>
    <property type="project" value="UniProtKB-KW"/>
</dbReference>
<dbReference type="GO" id="GO:0005840">
    <property type="term" value="C:ribosome"/>
    <property type="evidence" value="ECO:0007669"/>
    <property type="project" value="UniProtKB-KW"/>
</dbReference>
<dbReference type="GO" id="GO:0003735">
    <property type="term" value="F:structural constituent of ribosome"/>
    <property type="evidence" value="ECO:0007669"/>
    <property type="project" value="InterPro"/>
</dbReference>
<dbReference type="GO" id="GO:0006412">
    <property type="term" value="P:translation"/>
    <property type="evidence" value="ECO:0007669"/>
    <property type="project" value="UniProtKB-UniRule"/>
</dbReference>
<dbReference type="Gene3D" id="2.20.28.120">
    <property type="entry name" value="Ribosomal protein L33"/>
    <property type="match status" value="1"/>
</dbReference>
<dbReference type="HAMAP" id="MF_00294">
    <property type="entry name" value="Ribosomal_bL33"/>
    <property type="match status" value="1"/>
</dbReference>
<dbReference type="InterPro" id="IPR001705">
    <property type="entry name" value="Ribosomal_bL33"/>
</dbReference>
<dbReference type="InterPro" id="IPR018264">
    <property type="entry name" value="Ribosomal_bL33_CS"/>
</dbReference>
<dbReference type="InterPro" id="IPR038584">
    <property type="entry name" value="Ribosomal_bL33_sf"/>
</dbReference>
<dbReference type="InterPro" id="IPR011332">
    <property type="entry name" value="Ribosomal_zn-bd"/>
</dbReference>
<dbReference type="NCBIfam" id="NF001764">
    <property type="entry name" value="PRK00504.1"/>
    <property type="match status" value="1"/>
</dbReference>
<dbReference type="NCBIfam" id="NF001860">
    <property type="entry name" value="PRK00595.1"/>
    <property type="match status" value="1"/>
</dbReference>
<dbReference type="NCBIfam" id="TIGR01023">
    <property type="entry name" value="rpmG_bact"/>
    <property type="match status" value="1"/>
</dbReference>
<dbReference type="PANTHER" id="PTHR43168">
    <property type="entry name" value="50S RIBOSOMAL PROTEIN L33, CHLOROPLASTIC"/>
    <property type="match status" value="1"/>
</dbReference>
<dbReference type="PANTHER" id="PTHR43168:SF2">
    <property type="entry name" value="LARGE RIBOSOMAL SUBUNIT PROTEIN BL33C"/>
    <property type="match status" value="1"/>
</dbReference>
<dbReference type="Pfam" id="PF00471">
    <property type="entry name" value="Ribosomal_L33"/>
    <property type="match status" value="1"/>
</dbReference>
<dbReference type="SUPFAM" id="SSF57829">
    <property type="entry name" value="Zn-binding ribosomal proteins"/>
    <property type="match status" value="1"/>
</dbReference>
<dbReference type="PROSITE" id="PS00582">
    <property type="entry name" value="RIBOSOMAL_L33"/>
    <property type="match status" value="1"/>
</dbReference>
<keyword id="KW-0687">Ribonucleoprotein</keyword>
<keyword id="KW-0689">Ribosomal protein</keyword>
<reference key="1">
    <citation type="journal article" date="2003" name="Mol. Microbiol.">
        <title>Genome-based analysis of virulence genes in a non-biofilm-forming Staphylococcus epidermidis strain (ATCC 12228).</title>
        <authorList>
            <person name="Zhang Y.-Q."/>
            <person name="Ren S.-X."/>
            <person name="Li H.-L."/>
            <person name="Wang Y.-X."/>
            <person name="Fu G."/>
            <person name="Yang J."/>
            <person name="Qin Z.-Q."/>
            <person name="Miao Y.-G."/>
            <person name="Wang W.-Y."/>
            <person name="Chen R.-S."/>
            <person name="Shen Y."/>
            <person name="Chen Z."/>
            <person name="Yuan Z.-H."/>
            <person name="Zhao G.-P."/>
            <person name="Qu D."/>
            <person name="Danchin A."/>
            <person name="Wen Y.-M."/>
        </authorList>
    </citation>
    <scope>NUCLEOTIDE SEQUENCE [LARGE SCALE GENOMIC DNA]</scope>
    <source>
        <strain>ATCC 12228 / FDA PCI 1200</strain>
    </source>
</reference>
<name>RL331_STAES</name>
<sequence length="49" mass="5870">MRVNVTLACTECGDRNYISTKNKRNNPERVEMKKYCSRDNKHTLHRETK</sequence>